<comment type="function">
    <text evidence="2">Potent inhibitor of cathepsin l (cysteine protease). Does not inhibit trypsin or chymotrypsin (serine proteases). May protect the plant by inhibiting proteases of invading organisms.</text>
</comment>
<comment type="subcellular location">
    <subcellularLocation>
        <location evidence="1">Vacuole</location>
    </subcellularLocation>
</comment>
<comment type="tissue specificity">
    <text>Tubers, leaves.</text>
</comment>
<comment type="induction">
    <text evidence="3">By wounding. Also expressed in upper non-wounded systemic leaves.</text>
</comment>
<comment type="similarity">
    <text evidence="4">Belongs to the protease inhibitor I3 (leguminous Kunitz-type inhibitor) family.</text>
</comment>
<comment type="sequence caution" evidence="4">
    <conflict type="frameshift">
        <sequence resource="EMBL-CDS" id="AAA33844"/>
    </conflict>
</comment>
<proteinExistence type="evidence at protein level"/>
<keyword id="KW-0903">Direct protein sequencing</keyword>
<keyword id="KW-1015">Disulfide bond</keyword>
<keyword id="KW-0646">Protease inhibitor</keyword>
<keyword id="KW-1185">Reference proteome</keyword>
<keyword id="KW-0732">Signal</keyword>
<keyword id="KW-0789">Thiol protease inhibitor</keyword>
<keyword id="KW-0926">Vacuole</keyword>
<reference key="1">
    <citation type="journal article" date="1988" name="Plant Mol. Biol.">
        <title>Molecular cloning and analysis of four potato tuber mRNAs.</title>
        <authorList>
            <person name="Stiekema W.J."/>
            <person name="Heidekamp F."/>
            <person name="Dirkse W.G."/>
            <person name="van Beckum J."/>
            <person name="de Haan P."/>
            <person name="ten Bosch C."/>
            <person name="Louwerse J.D."/>
        </authorList>
        <dbReference type="AGRICOLA" id="IND92000050"/>
    </citation>
    <scope>NUCLEOTIDE SEQUENCE [MRNA] OF 3-222</scope>
    <source>
        <strain>cv. Bintje</strain>
        <tissue>Tuber</tissue>
    </source>
</reference>
<reference key="2">
    <citation type="journal article" date="1988" name="Biol. Chem. Hoppe-Seyler Suppl.">
        <title>Inhibitors of cysteine proteinases from potato.</title>
        <authorList>
            <person name="Brzin J."/>
            <person name="Popovic T."/>
            <person name="Drobnic-Kosorok M."/>
            <person name="Kotnik M."/>
            <person name="Turk V."/>
        </authorList>
    </citation>
    <scope>PROTEIN SEQUENCE OF 43-52</scope>
</reference>
<reference key="3">
    <citation type="journal article" date="1990" name="Plant Physiol.">
        <title>Purification and characterization of the 22-kilodalton potato tuber proteins.</title>
        <authorList>
            <person name="Suh S.-C."/>
            <person name="Peterson J.E."/>
            <person name="Stiekema W.J."/>
            <person name="Hannapel D.J."/>
        </authorList>
    </citation>
    <scope>SEQUENCE REVISION TO 59-87</scope>
</reference>
<reference key="4">
    <citation type="journal article" date="1993" name="FEBS Lett.">
        <title>The primary structure of inhibitor of cysteine proteinases from potato.</title>
        <authorList>
            <person name="Krizaj I."/>
            <person name="Drobnic-Kosorok M."/>
            <person name="Brzin J."/>
            <person name="Jerala R."/>
            <person name="Turk V."/>
        </authorList>
    </citation>
    <scope>PROTEIN SEQUENCE OF 43-222</scope>
    <source>
        <tissue>Tuber</tissue>
    </source>
</reference>
<reference key="5">
    <citation type="journal article" date="1990" name="FEBS Lett.">
        <title>Inhibition of cysteine proteinases by a protein inhibitor from potato.</title>
        <authorList>
            <person name="Rowan A.D."/>
            <person name="Brzin J."/>
            <person name="Buttle D.J."/>
            <person name="Barrett A.J."/>
        </authorList>
    </citation>
    <scope>FUNCTION</scope>
</reference>
<reference key="6">
    <citation type="journal article" date="1991" name="Planta">
        <title>Proteinase-inhibitor activity and wound-inducible gene expression of the 22-kDa potato-tuber proteins.</title>
        <authorList>
            <person name="Suh S.-C."/>
            <person name="Stiekema W.J."/>
            <person name="Hannapel D.J."/>
        </authorList>
    </citation>
    <scope>INDUCTION</scope>
</reference>
<protein>
    <recommendedName>
        <fullName>Cysteine protease inhibitor 1</fullName>
    </recommendedName>
    <alternativeName>
        <fullName>P340</fullName>
    </alternativeName>
    <alternativeName>
        <fullName>P34021</fullName>
    </alternativeName>
    <alternativeName>
        <fullName>PCPI 8.3</fullName>
    </alternativeName>
</protein>
<feature type="signal peptide" evidence="1">
    <location>
        <begin position="1"/>
        <end position="26"/>
    </location>
</feature>
<feature type="propeptide" id="PRO_0000016924" evidence="1">
    <location>
        <begin position="27"/>
        <end position="42"/>
    </location>
</feature>
<feature type="chain" id="PRO_0000016925" description="Cysteine protease inhibitor 1">
    <location>
        <begin position="43"/>
        <end position="222"/>
    </location>
</feature>
<feature type="short sequence motif" description="Vacuolar targeting signal" evidence="1">
    <location>
        <begin position="29"/>
        <end position="34"/>
    </location>
</feature>
<feature type="disulfide bond" evidence="1">
    <location>
        <begin position="84"/>
        <end position="136"/>
    </location>
</feature>
<feature type="disulfide bond" evidence="1">
    <location>
        <begin position="185"/>
        <end position="191"/>
    </location>
</feature>
<feature type="sequence conflict" description="In Ref. 2; AA sequence." evidence="4" ref="2">
    <original>D</original>
    <variation>K</variation>
    <location>
        <position position="50"/>
    </location>
</feature>
<feature type="sequence conflict" description="In Ref. 1; CAA31578/AAA33846." evidence="4" ref="1">
    <original>G</original>
    <variation>R</variation>
    <location>
        <position position="174"/>
    </location>
</feature>
<accession>P20347</accession>
<accession>Q41497</accession>
<organism>
    <name type="scientific">Solanum tuberosum</name>
    <name type="common">Potato</name>
    <dbReference type="NCBI Taxonomy" id="4113"/>
    <lineage>
        <taxon>Eukaryota</taxon>
        <taxon>Viridiplantae</taxon>
        <taxon>Streptophyta</taxon>
        <taxon>Embryophyta</taxon>
        <taxon>Tracheophyta</taxon>
        <taxon>Spermatophyta</taxon>
        <taxon>Magnoliopsida</taxon>
        <taxon>eudicotyledons</taxon>
        <taxon>Gunneridae</taxon>
        <taxon>Pentapetalae</taxon>
        <taxon>asterids</taxon>
        <taxon>lamiids</taxon>
        <taxon>Solanales</taxon>
        <taxon>Solanaceae</taxon>
        <taxon>Solanoideae</taxon>
        <taxon>Solaneae</taxon>
        <taxon>Solanum</taxon>
    </lineage>
</organism>
<name>CPI1_SOLTU</name>
<sequence length="222" mass="24684">MKSINILSFLLLSSTLSLVAFARSFTSENPIVLPTTCHDDDNLVLPEVYDQDGNPLRIGERYIINNPLLGAGAVYLYNIGNLQCPNAVLQHMSIPQFLGEGTPVVFVRKSESDYGDVVRVMTVVYIKFFVKTTKLCVDQTVWKVNDEQLVVTGGKVGNENDIFKIMKTDLVTPGGSKYVYKLLHCPSHLGCKNIGGNFKNGYPRLVTVDDDKDFIPFVFIKA</sequence>
<dbReference type="EMBL" id="X13181">
    <property type="protein sequence ID" value="CAA31578.1"/>
    <property type="status" value="ALT_FRAME"/>
    <property type="molecule type" value="mRNA"/>
</dbReference>
<dbReference type="EMBL" id="M22144">
    <property type="protein sequence ID" value="AAA33846.1"/>
    <property type="status" value="ALT_FRAME"/>
    <property type="molecule type" value="mRNA"/>
</dbReference>
<dbReference type="EMBL" id="M22145">
    <property type="protein sequence ID" value="AAA33845.1"/>
    <property type="molecule type" value="mRNA"/>
</dbReference>
<dbReference type="EMBL" id="M22143">
    <property type="protein sequence ID" value="AAA33844.1"/>
    <property type="status" value="ALT_FRAME"/>
    <property type="molecule type" value="mRNA"/>
</dbReference>
<dbReference type="PIR" id="S05595">
    <property type="entry name" value="S05595"/>
</dbReference>
<dbReference type="PIR" id="S38742">
    <property type="entry name" value="S38742"/>
</dbReference>
<dbReference type="SMR" id="P20347"/>
<dbReference type="STRING" id="4113.P20347"/>
<dbReference type="Allergome" id="1670">
    <property type="allergen name" value="Sola t 3.0102"/>
</dbReference>
<dbReference type="Allergome" id="641">
    <property type="allergen name" value="Sola t 3"/>
</dbReference>
<dbReference type="MEROPS" id="I03.017"/>
<dbReference type="PaxDb" id="4113-PGSC0003DMT400026285"/>
<dbReference type="InParanoid" id="P20347"/>
<dbReference type="OrthoDB" id="1270092at2759"/>
<dbReference type="Proteomes" id="UP000011115">
    <property type="component" value="Unassembled WGS sequence"/>
</dbReference>
<dbReference type="ExpressionAtlas" id="P20347">
    <property type="expression patterns" value="differential"/>
</dbReference>
<dbReference type="GO" id="GO:0005773">
    <property type="term" value="C:vacuole"/>
    <property type="evidence" value="ECO:0007669"/>
    <property type="project" value="UniProtKB-SubCell"/>
</dbReference>
<dbReference type="GO" id="GO:0004869">
    <property type="term" value="F:cysteine-type endopeptidase inhibitor activity"/>
    <property type="evidence" value="ECO:0007669"/>
    <property type="project" value="UniProtKB-KW"/>
</dbReference>
<dbReference type="CDD" id="cd23372">
    <property type="entry name" value="beta-trefoil_STI_CPI-like"/>
    <property type="match status" value="1"/>
</dbReference>
<dbReference type="Gene3D" id="2.80.10.50">
    <property type="match status" value="1"/>
</dbReference>
<dbReference type="InterPro" id="IPR011065">
    <property type="entry name" value="Kunitz_inhibitor_STI-like_sf"/>
</dbReference>
<dbReference type="InterPro" id="IPR002160">
    <property type="entry name" value="Prot_inh_Kunz-lg"/>
</dbReference>
<dbReference type="PANTHER" id="PTHR33107:SF44">
    <property type="entry name" value="CYSTEINE PROTEASE INHIBITOR 1"/>
    <property type="match status" value="1"/>
</dbReference>
<dbReference type="PANTHER" id="PTHR33107">
    <property type="entry name" value="KUNITZ TRYPSIN INHIBITOR 2"/>
    <property type="match status" value="1"/>
</dbReference>
<dbReference type="Pfam" id="PF00197">
    <property type="entry name" value="Kunitz_legume"/>
    <property type="match status" value="1"/>
</dbReference>
<dbReference type="SMART" id="SM00452">
    <property type="entry name" value="STI"/>
    <property type="match status" value="1"/>
</dbReference>
<dbReference type="SUPFAM" id="SSF50386">
    <property type="entry name" value="STI-like"/>
    <property type="match status" value="1"/>
</dbReference>
<dbReference type="PROSITE" id="PS00283">
    <property type="entry name" value="SOYBEAN_KUNITZ"/>
    <property type="match status" value="1"/>
</dbReference>
<evidence type="ECO:0000250" key="1"/>
<evidence type="ECO:0000269" key="2">
    <source>
    </source>
</evidence>
<evidence type="ECO:0000269" key="3">
    <source ref="6"/>
</evidence>
<evidence type="ECO:0000305" key="4"/>